<feature type="chain" id="PRO_1000120929" description="Large ribosomal subunit protein uL10">
    <location>
        <begin position="1"/>
        <end position="165"/>
    </location>
</feature>
<dbReference type="EMBL" id="CP000958">
    <property type="protein sequence ID" value="ACA89497.1"/>
    <property type="molecule type" value="Genomic_DNA"/>
</dbReference>
<dbReference type="RefSeq" id="WP_011546647.1">
    <property type="nucleotide sequence ID" value="NC_010508.1"/>
</dbReference>
<dbReference type="SMR" id="B1JU12"/>
<dbReference type="GeneID" id="83047121"/>
<dbReference type="KEGG" id="bcm:Bcenmc03_0317"/>
<dbReference type="HOGENOM" id="CLU_092227_0_1_4"/>
<dbReference type="Proteomes" id="UP000002169">
    <property type="component" value="Chromosome 1"/>
</dbReference>
<dbReference type="GO" id="GO:1990904">
    <property type="term" value="C:ribonucleoprotein complex"/>
    <property type="evidence" value="ECO:0007669"/>
    <property type="project" value="UniProtKB-KW"/>
</dbReference>
<dbReference type="GO" id="GO:0005840">
    <property type="term" value="C:ribosome"/>
    <property type="evidence" value="ECO:0007669"/>
    <property type="project" value="UniProtKB-KW"/>
</dbReference>
<dbReference type="GO" id="GO:0070180">
    <property type="term" value="F:large ribosomal subunit rRNA binding"/>
    <property type="evidence" value="ECO:0007669"/>
    <property type="project" value="UniProtKB-UniRule"/>
</dbReference>
<dbReference type="GO" id="GO:0006412">
    <property type="term" value="P:translation"/>
    <property type="evidence" value="ECO:0007669"/>
    <property type="project" value="UniProtKB-UniRule"/>
</dbReference>
<dbReference type="CDD" id="cd05797">
    <property type="entry name" value="Ribosomal_L10"/>
    <property type="match status" value="1"/>
</dbReference>
<dbReference type="Gene3D" id="3.30.70.1730">
    <property type="match status" value="1"/>
</dbReference>
<dbReference type="Gene3D" id="6.10.250.290">
    <property type="match status" value="1"/>
</dbReference>
<dbReference type="HAMAP" id="MF_00362">
    <property type="entry name" value="Ribosomal_uL10"/>
    <property type="match status" value="1"/>
</dbReference>
<dbReference type="InterPro" id="IPR001790">
    <property type="entry name" value="Ribosomal_uL10"/>
</dbReference>
<dbReference type="InterPro" id="IPR043141">
    <property type="entry name" value="Ribosomal_uL10-like_sf"/>
</dbReference>
<dbReference type="InterPro" id="IPR022973">
    <property type="entry name" value="Ribosomal_uL10_bac"/>
</dbReference>
<dbReference type="InterPro" id="IPR047865">
    <property type="entry name" value="Ribosomal_uL10_bac_type"/>
</dbReference>
<dbReference type="NCBIfam" id="NF000955">
    <property type="entry name" value="PRK00099.1-1"/>
    <property type="match status" value="1"/>
</dbReference>
<dbReference type="PANTHER" id="PTHR11560">
    <property type="entry name" value="39S RIBOSOMAL PROTEIN L10, MITOCHONDRIAL"/>
    <property type="match status" value="1"/>
</dbReference>
<dbReference type="Pfam" id="PF00466">
    <property type="entry name" value="Ribosomal_L10"/>
    <property type="match status" value="1"/>
</dbReference>
<dbReference type="SUPFAM" id="SSF160369">
    <property type="entry name" value="Ribosomal protein L10-like"/>
    <property type="match status" value="1"/>
</dbReference>
<accession>B1JU12</accession>
<name>RL10_BURO0</name>
<evidence type="ECO:0000255" key="1">
    <source>
        <dbReference type="HAMAP-Rule" id="MF_00362"/>
    </source>
</evidence>
<evidence type="ECO:0000305" key="2"/>
<proteinExistence type="inferred from homology"/>
<gene>
    <name evidence="1" type="primary">rplJ</name>
    <name type="ordered locus">Bcenmc03_0317</name>
</gene>
<keyword id="KW-0687">Ribonucleoprotein</keyword>
<keyword id="KW-0689">Ribosomal protein</keyword>
<keyword id="KW-0694">RNA-binding</keyword>
<keyword id="KW-0699">rRNA-binding</keyword>
<protein>
    <recommendedName>
        <fullName evidence="1">Large ribosomal subunit protein uL10</fullName>
    </recommendedName>
    <alternativeName>
        <fullName evidence="2">50S ribosomal protein L10</fullName>
    </alternativeName>
</protein>
<organism>
    <name type="scientific">Burkholderia orbicola (strain MC0-3)</name>
    <dbReference type="NCBI Taxonomy" id="406425"/>
    <lineage>
        <taxon>Bacteria</taxon>
        <taxon>Pseudomonadati</taxon>
        <taxon>Pseudomonadota</taxon>
        <taxon>Betaproteobacteria</taxon>
        <taxon>Burkholderiales</taxon>
        <taxon>Burkholderiaceae</taxon>
        <taxon>Burkholderia</taxon>
        <taxon>Burkholderia cepacia complex</taxon>
        <taxon>Burkholderia orbicola</taxon>
    </lineage>
</organism>
<reference key="1">
    <citation type="submission" date="2008-02" db="EMBL/GenBank/DDBJ databases">
        <title>Complete sequence of chromosome 1 of Burkholderia cenocepacia MC0-3.</title>
        <authorList>
            <person name="Copeland A."/>
            <person name="Lucas S."/>
            <person name="Lapidus A."/>
            <person name="Barry K."/>
            <person name="Bruce D."/>
            <person name="Goodwin L."/>
            <person name="Glavina del Rio T."/>
            <person name="Dalin E."/>
            <person name="Tice H."/>
            <person name="Pitluck S."/>
            <person name="Chain P."/>
            <person name="Malfatti S."/>
            <person name="Shin M."/>
            <person name="Vergez L."/>
            <person name="Schmutz J."/>
            <person name="Larimer F."/>
            <person name="Land M."/>
            <person name="Hauser L."/>
            <person name="Kyrpides N."/>
            <person name="Mikhailova N."/>
            <person name="Tiedje J."/>
            <person name="Richardson P."/>
        </authorList>
    </citation>
    <scope>NUCLEOTIDE SEQUENCE [LARGE SCALE GENOMIC DNA]</scope>
    <source>
        <strain>MC0-3</strain>
    </source>
</reference>
<sequence>MPLNREDKQAVVAEVSAQVAKAQTVVLAEYRGIAVGDLTKLRAKAREQQVYLRVLKNTLARRAVEGTPFAPLAEQMTGPLIYGISEDAIAAAKVVNDFSKSNEKLVIKAGSFDGKVMDKAGVQALASIPSREELLSKLLFVMQSPVSGFARALAALAEKKQAEAA</sequence>
<comment type="function">
    <text evidence="1">Forms part of the ribosomal stalk, playing a central role in the interaction of the ribosome with GTP-bound translation factors.</text>
</comment>
<comment type="subunit">
    <text evidence="1">Part of the ribosomal stalk of the 50S ribosomal subunit. The N-terminus interacts with L11 and the large rRNA to form the base of the stalk. The C-terminus forms an elongated spine to which L12 dimers bind in a sequential fashion forming a multimeric L10(L12)X complex.</text>
</comment>
<comment type="similarity">
    <text evidence="1">Belongs to the universal ribosomal protein uL10 family.</text>
</comment>